<geneLocation type="mitochondrion"/>
<dbReference type="EC" id="7.1.1.2" evidence="1"/>
<dbReference type="EMBL" id="AY582636">
    <property type="protein sequence ID" value="AAS92736.1"/>
    <property type="molecule type" value="Genomic_DNA"/>
</dbReference>
<dbReference type="SMR" id="Q591Y7"/>
<dbReference type="GO" id="GO:0005743">
    <property type="term" value="C:mitochondrial inner membrane"/>
    <property type="evidence" value="ECO:0000250"/>
    <property type="project" value="UniProtKB"/>
</dbReference>
<dbReference type="GO" id="GO:0008137">
    <property type="term" value="F:NADH dehydrogenase (ubiquinone) activity"/>
    <property type="evidence" value="ECO:0000250"/>
    <property type="project" value="UniProtKB"/>
</dbReference>
<dbReference type="GO" id="GO:0048039">
    <property type="term" value="F:ubiquinone binding"/>
    <property type="evidence" value="ECO:0007669"/>
    <property type="project" value="TreeGrafter"/>
</dbReference>
<dbReference type="GO" id="GO:0015990">
    <property type="term" value="P:electron transport coupled proton transport"/>
    <property type="evidence" value="ECO:0007669"/>
    <property type="project" value="TreeGrafter"/>
</dbReference>
<dbReference type="GO" id="GO:0006120">
    <property type="term" value="P:mitochondrial electron transport, NADH to ubiquinone"/>
    <property type="evidence" value="ECO:0000250"/>
    <property type="project" value="UniProtKB"/>
</dbReference>
<dbReference type="GO" id="GO:0032981">
    <property type="term" value="P:mitochondrial respiratory chain complex I assembly"/>
    <property type="evidence" value="ECO:0000250"/>
    <property type="project" value="UniProtKB"/>
</dbReference>
<dbReference type="InterPro" id="IPR000260">
    <property type="entry name" value="NADH4_N"/>
</dbReference>
<dbReference type="InterPro" id="IPR010227">
    <property type="entry name" value="NADH_Q_OxRdtase_chainM/4"/>
</dbReference>
<dbReference type="InterPro" id="IPR003918">
    <property type="entry name" value="NADH_UbQ_OxRdtase"/>
</dbReference>
<dbReference type="InterPro" id="IPR001750">
    <property type="entry name" value="ND/Mrp_TM"/>
</dbReference>
<dbReference type="NCBIfam" id="TIGR01972">
    <property type="entry name" value="NDH_I_M"/>
    <property type="match status" value="1"/>
</dbReference>
<dbReference type="PANTHER" id="PTHR43507">
    <property type="entry name" value="NADH-UBIQUINONE OXIDOREDUCTASE CHAIN 4"/>
    <property type="match status" value="1"/>
</dbReference>
<dbReference type="PANTHER" id="PTHR43507:SF20">
    <property type="entry name" value="NADH-UBIQUINONE OXIDOREDUCTASE CHAIN 4"/>
    <property type="match status" value="1"/>
</dbReference>
<dbReference type="Pfam" id="PF01059">
    <property type="entry name" value="Oxidored_q5_N"/>
    <property type="match status" value="1"/>
</dbReference>
<dbReference type="Pfam" id="PF00361">
    <property type="entry name" value="Proton_antipo_M"/>
    <property type="match status" value="1"/>
</dbReference>
<dbReference type="PRINTS" id="PR01437">
    <property type="entry name" value="NUOXDRDTASE4"/>
</dbReference>
<keyword id="KW-0249">Electron transport</keyword>
<keyword id="KW-0472">Membrane</keyword>
<keyword id="KW-0496">Mitochondrion</keyword>
<keyword id="KW-0999">Mitochondrion inner membrane</keyword>
<keyword id="KW-0520">NAD</keyword>
<keyword id="KW-0679">Respiratory chain</keyword>
<keyword id="KW-1278">Translocase</keyword>
<keyword id="KW-0812">Transmembrane</keyword>
<keyword id="KW-1133">Transmembrane helix</keyword>
<keyword id="KW-0813">Transport</keyword>
<keyword id="KW-0830">Ubiquinone</keyword>
<sequence length="459" mass="52402">MLKIIMPTIMLFPVIWYSNNTMIWINMTSYSLMISLMTLPLLNQTENNSNNFSLTFFSDSLSSPLLMLTVWLLPLMIMASQHHLTKESLMRKKLYLSMLIFLQMFLIMTFTATELILFYILFESTLIPTLIIITRWGNQTERLNAGLYFLFYTLIGSLPLLVALIYVQNSLGSLNYLVMNMWSQDMSGLWSSNLLWLACIMAFMVKMPLYGLHLWLPKAHVEAPIAGSMVLAAVLLKLGGYGMLRLTMILNPTTKIMAYPFIMLCLWGMIMTSSICLRQTDLKSLIAYSSVSHMALVIVAILMQTPWSFMGATALMIAHGLTSSMLFCLANSNYERIHSRTMLLARGLQAFLPLMATWWLLASLTNLALPPFINLIGELFVIMASFSWSNLTIIMTGFNMLITALYSLYMLTMTQRGKFTYHIHNIKPSYTRENTLMSMHMLPLIMLTFNPKIIMGLTY</sequence>
<name>NU4M_MICSM</name>
<accession>Q591Y7</accession>
<comment type="function">
    <text evidence="1">Core subunit of the mitochondrial membrane respiratory chain NADH dehydrogenase (Complex I) which catalyzes electron transfer from NADH through the respiratory chain, using ubiquinone as an electron acceptor. Essential for the catalytic activity and assembly of complex I.</text>
</comment>
<comment type="catalytic activity">
    <reaction evidence="1">
        <text>a ubiquinone + NADH + 5 H(+)(in) = a ubiquinol + NAD(+) + 4 H(+)(out)</text>
        <dbReference type="Rhea" id="RHEA:29091"/>
        <dbReference type="Rhea" id="RHEA-COMP:9565"/>
        <dbReference type="Rhea" id="RHEA-COMP:9566"/>
        <dbReference type="ChEBI" id="CHEBI:15378"/>
        <dbReference type="ChEBI" id="CHEBI:16389"/>
        <dbReference type="ChEBI" id="CHEBI:17976"/>
        <dbReference type="ChEBI" id="CHEBI:57540"/>
        <dbReference type="ChEBI" id="CHEBI:57945"/>
        <dbReference type="EC" id="7.1.1.2"/>
    </reaction>
</comment>
<comment type="subunit">
    <text evidence="2">Core subunit of respiratory chain NADH dehydrogenase (Complex I) which is composed of 45 different subunits.</text>
</comment>
<comment type="subcellular location">
    <subcellularLocation>
        <location evidence="2">Mitochondrion inner membrane</location>
        <topology evidence="3">Multi-pass membrane protein</topology>
    </subcellularLocation>
</comment>
<comment type="similarity">
    <text evidence="4">Belongs to the complex I subunit 4 family.</text>
</comment>
<feature type="chain" id="PRO_0000117956" description="NADH-ubiquinone oxidoreductase chain 4">
    <location>
        <begin position="1"/>
        <end position="459"/>
    </location>
</feature>
<feature type="transmembrane region" description="Helical" evidence="3">
    <location>
        <begin position="20"/>
        <end position="42"/>
    </location>
</feature>
<feature type="transmembrane region" description="Helical" evidence="3">
    <location>
        <begin position="60"/>
        <end position="80"/>
    </location>
</feature>
<feature type="transmembrane region" description="Helical" evidence="3">
    <location>
        <begin position="98"/>
        <end position="118"/>
    </location>
</feature>
<feature type="transmembrane region" description="Helical" evidence="3">
    <location>
        <begin position="147"/>
        <end position="167"/>
    </location>
</feature>
<feature type="transmembrane region" description="Helical" evidence="3">
    <location>
        <begin position="194"/>
        <end position="214"/>
    </location>
</feature>
<feature type="transmembrane region" description="Helical" evidence="3">
    <location>
        <begin position="224"/>
        <end position="244"/>
    </location>
</feature>
<feature type="transmembrane region" description="Helical" evidence="3">
    <location>
        <begin position="256"/>
        <end position="276"/>
    </location>
</feature>
<feature type="transmembrane region" description="Helical" evidence="3">
    <location>
        <begin position="284"/>
        <end position="303"/>
    </location>
</feature>
<feature type="transmembrane region" description="Helical" evidence="3">
    <location>
        <begin position="308"/>
        <end position="330"/>
    </location>
</feature>
<feature type="transmembrane region" description="Helical" evidence="3">
    <location>
        <begin position="351"/>
        <end position="373"/>
    </location>
</feature>
<feature type="transmembrane region" description="Helical" evidence="3">
    <location>
        <begin position="391"/>
        <end position="411"/>
    </location>
</feature>
<proteinExistence type="inferred from homology"/>
<evidence type="ECO:0000250" key="1">
    <source>
        <dbReference type="UniProtKB" id="P03905"/>
    </source>
</evidence>
<evidence type="ECO:0000250" key="2">
    <source>
        <dbReference type="UniProtKB" id="P03910"/>
    </source>
</evidence>
<evidence type="ECO:0000255" key="3"/>
<evidence type="ECO:0000305" key="4"/>
<reference key="1">
    <citation type="submission" date="2004-03" db="EMBL/GenBank/DDBJ databases">
        <title>Revision of the mouse lemurs (Primates, Microcebus) in Eastern Madagascar with the description of three new species.</title>
        <authorList>
            <person name="Louis E.E. Jr."/>
            <person name="Coles M.S."/>
            <person name="Andrianompohavana R."/>
            <person name="Sommer J.A."/>
            <person name="Mayor M.I."/>
            <person name="Brenneman R.A."/>
        </authorList>
    </citation>
    <scope>NUCLEOTIDE SEQUENCE [GENOMIC DNA]</scope>
    <source>
        <strain>Isolate GAR6</strain>
    </source>
</reference>
<organism>
    <name type="scientific">Microcebus sambiranensis</name>
    <name type="common">Sambirano mouse lemur</name>
    <dbReference type="NCBI Taxonomy" id="143353"/>
    <lineage>
        <taxon>Eukaryota</taxon>
        <taxon>Metazoa</taxon>
        <taxon>Chordata</taxon>
        <taxon>Craniata</taxon>
        <taxon>Vertebrata</taxon>
        <taxon>Euteleostomi</taxon>
        <taxon>Mammalia</taxon>
        <taxon>Eutheria</taxon>
        <taxon>Euarchontoglires</taxon>
        <taxon>Primates</taxon>
        <taxon>Strepsirrhini</taxon>
        <taxon>Lemuriformes</taxon>
        <taxon>Cheirogaleidae</taxon>
        <taxon>Microcebus</taxon>
    </lineage>
</organism>
<gene>
    <name type="primary">MT-ND4</name>
    <name type="synonym">MTND4</name>
    <name type="synonym">NADH4</name>
    <name type="synonym">ND4</name>
</gene>
<protein>
    <recommendedName>
        <fullName>NADH-ubiquinone oxidoreductase chain 4</fullName>
        <ecNumber evidence="1">7.1.1.2</ecNumber>
    </recommendedName>
    <alternativeName>
        <fullName>NADH dehydrogenase subunit 4</fullName>
    </alternativeName>
</protein>